<comment type="function">
    <text evidence="1">Associates with the EF-Tu.GDP complex and induces the exchange of GDP to GTP. It remains bound to the aminoacyl-tRNA.EF-Tu.GTP complex up to the GTP hydrolysis stage on the ribosome.</text>
</comment>
<comment type="subcellular location">
    <subcellularLocation>
        <location evidence="1">Cytoplasm</location>
    </subcellularLocation>
</comment>
<comment type="similarity">
    <text evidence="1">Belongs to the EF-Ts family.</text>
</comment>
<reference key="1">
    <citation type="journal article" date="2008" name="J. Bacteriol.">
        <title>Complete genome sequence of the mosquitocidal bacterium Bacillus sphaericus C3-41 and comparison with those of closely related Bacillus species.</title>
        <authorList>
            <person name="Hu X."/>
            <person name="Fan W."/>
            <person name="Han B."/>
            <person name="Liu H."/>
            <person name="Zheng D."/>
            <person name="Li Q."/>
            <person name="Dong W."/>
            <person name="Yan J."/>
            <person name="Gao M."/>
            <person name="Berry C."/>
            <person name="Yuan Z."/>
        </authorList>
    </citation>
    <scope>NUCLEOTIDE SEQUENCE [LARGE SCALE GENOMIC DNA]</scope>
    <source>
        <strain>C3-41</strain>
    </source>
</reference>
<feature type="chain" id="PRO_1000116757" description="Elongation factor Ts">
    <location>
        <begin position="1"/>
        <end position="295"/>
    </location>
</feature>
<feature type="region of interest" description="Involved in Mg(2+) ion dislocation from EF-Tu" evidence="1">
    <location>
        <begin position="80"/>
        <end position="83"/>
    </location>
</feature>
<organism>
    <name type="scientific">Lysinibacillus sphaericus (strain C3-41)</name>
    <dbReference type="NCBI Taxonomy" id="444177"/>
    <lineage>
        <taxon>Bacteria</taxon>
        <taxon>Bacillati</taxon>
        <taxon>Bacillota</taxon>
        <taxon>Bacilli</taxon>
        <taxon>Bacillales</taxon>
        <taxon>Bacillaceae</taxon>
        <taxon>Lysinibacillus</taxon>
    </lineage>
</organism>
<protein>
    <recommendedName>
        <fullName evidence="1">Elongation factor Ts</fullName>
        <shortName evidence="1">EF-Ts</shortName>
    </recommendedName>
</protein>
<dbReference type="EMBL" id="CP000817">
    <property type="protein sequence ID" value="ACA39182.1"/>
    <property type="molecule type" value="Genomic_DNA"/>
</dbReference>
<dbReference type="RefSeq" id="WP_012293292.1">
    <property type="nucleotide sequence ID" value="NC_010382.1"/>
</dbReference>
<dbReference type="SMR" id="B1HQZ1"/>
<dbReference type="EnsemblBacteria" id="ACA39182">
    <property type="protein sequence ID" value="ACA39182"/>
    <property type="gene ID" value="Bsph_1584"/>
</dbReference>
<dbReference type="KEGG" id="lsp:Bsph_1584"/>
<dbReference type="HOGENOM" id="CLU_047155_0_2_9"/>
<dbReference type="Proteomes" id="UP000002164">
    <property type="component" value="Chromosome"/>
</dbReference>
<dbReference type="GO" id="GO:0005737">
    <property type="term" value="C:cytoplasm"/>
    <property type="evidence" value="ECO:0007669"/>
    <property type="project" value="UniProtKB-SubCell"/>
</dbReference>
<dbReference type="GO" id="GO:0003746">
    <property type="term" value="F:translation elongation factor activity"/>
    <property type="evidence" value="ECO:0007669"/>
    <property type="project" value="UniProtKB-UniRule"/>
</dbReference>
<dbReference type="CDD" id="cd14275">
    <property type="entry name" value="UBA_EF-Ts"/>
    <property type="match status" value="1"/>
</dbReference>
<dbReference type="FunFam" id="1.10.286.20:FF:000003">
    <property type="entry name" value="Elongation factor Ts"/>
    <property type="match status" value="1"/>
</dbReference>
<dbReference type="FunFam" id="1.10.8.10:FF:000001">
    <property type="entry name" value="Elongation factor Ts"/>
    <property type="match status" value="1"/>
</dbReference>
<dbReference type="Gene3D" id="1.10.286.20">
    <property type="match status" value="1"/>
</dbReference>
<dbReference type="Gene3D" id="1.10.8.10">
    <property type="entry name" value="DNA helicase RuvA subunit, C-terminal domain"/>
    <property type="match status" value="1"/>
</dbReference>
<dbReference type="Gene3D" id="3.30.479.20">
    <property type="entry name" value="Elongation factor Ts, dimerisation domain"/>
    <property type="match status" value="2"/>
</dbReference>
<dbReference type="HAMAP" id="MF_00050">
    <property type="entry name" value="EF_Ts"/>
    <property type="match status" value="1"/>
</dbReference>
<dbReference type="InterPro" id="IPR036402">
    <property type="entry name" value="EF-Ts_dimer_sf"/>
</dbReference>
<dbReference type="InterPro" id="IPR001816">
    <property type="entry name" value="Transl_elong_EFTs/EF1B"/>
</dbReference>
<dbReference type="InterPro" id="IPR014039">
    <property type="entry name" value="Transl_elong_EFTs/EF1B_dimer"/>
</dbReference>
<dbReference type="InterPro" id="IPR018101">
    <property type="entry name" value="Transl_elong_Ts_CS"/>
</dbReference>
<dbReference type="InterPro" id="IPR009060">
    <property type="entry name" value="UBA-like_sf"/>
</dbReference>
<dbReference type="NCBIfam" id="TIGR00116">
    <property type="entry name" value="tsf"/>
    <property type="match status" value="1"/>
</dbReference>
<dbReference type="PANTHER" id="PTHR11741">
    <property type="entry name" value="ELONGATION FACTOR TS"/>
    <property type="match status" value="1"/>
</dbReference>
<dbReference type="PANTHER" id="PTHR11741:SF0">
    <property type="entry name" value="ELONGATION FACTOR TS, MITOCHONDRIAL"/>
    <property type="match status" value="1"/>
</dbReference>
<dbReference type="Pfam" id="PF00889">
    <property type="entry name" value="EF_TS"/>
    <property type="match status" value="1"/>
</dbReference>
<dbReference type="SUPFAM" id="SSF54713">
    <property type="entry name" value="Elongation factor Ts (EF-Ts), dimerisation domain"/>
    <property type="match status" value="2"/>
</dbReference>
<dbReference type="SUPFAM" id="SSF46934">
    <property type="entry name" value="UBA-like"/>
    <property type="match status" value="1"/>
</dbReference>
<dbReference type="PROSITE" id="PS01126">
    <property type="entry name" value="EF_TS_1"/>
    <property type="match status" value="1"/>
</dbReference>
<dbReference type="PROSITE" id="PS01127">
    <property type="entry name" value="EF_TS_2"/>
    <property type="match status" value="1"/>
</dbReference>
<name>EFTS_LYSSC</name>
<sequence length="295" mass="31945">MANITAQLVKELREKTGAGMMDCKKALVQTDGDLEAAIDFLREKGLSSAAKKADRIAAEGTTYILEQGNEAIILEVNAETDFVAKNDKFQVLVSSLAEQLLTAKPASVEAALELTNAEGVKIEDQISTAVATIGEKITLRRFEIKTKTDADSFGAYLHMGGRIGVLVTLEGSTDASAAKDVAMHIAAINPTYVSRDEVSAEEVERERKVLTEQALNEGKPENIVAKMVEGRLGKYFEDVCLLDQSFVKNSDQKVRDFVASTGGSVNGFVRYAVGEGIEKREDNFAEEVMSQVKGN</sequence>
<accession>B1HQZ1</accession>
<evidence type="ECO:0000255" key="1">
    <source>
        <dbReference type="HAMAP-Rule" id="MF_00050"/>
    </source>
</evidence>
<gene>
    <name evidence="1" type="primary">tsf</name>
    <name type="ordered locus">Bsph_1584</name>
</gene>
<keyword id="KW-0963">Cytoplasm</keyword>
<keyword id="KW-0251">Elongation factor</keyword>
<keyword id="KW-0648">Protein biosynthesis</keyword>
<proteinExistence type="inferred from homology"/>